<organism>
    <name type="scientific">Brucella suis biovar 1 (strain 1330)</name>
    <dbReference type="NCBI Taxonomy" id="204722"/>
    <lineage>
        <taxon>Bacteria</taxon>
        <taxon>Pseudomonadati</taxon>
        <taxon>Pseudomonadota</taxon>
        <taxon>Alphaproteobacteria</taxon>
        <taxon>Hyphomicrobiales</taxon>
        <taxon>Brucellaceae</taxon>
        <taxon>Brucella/Ochrobactrum group</taxon>
        <taxon>Brucella</taxon>
    </lineage>
</organism>
<sequence>MARDATKLEATVAKLKKHWAESAPRDMRAAFSADPGRFGRYSLCLDDLLFDWSKCRVNDETMALLKELAVAADVEGRRAAMFAGEHINNTEDRAVLHVALRDTSSKEVLVDGHNVLPDVKHVLDRMAAFADGIRSGALKGATGRKITDIVNIGIGGSDLGPVMATLALAPYHDGPRAHFVSNIDGAHIADTLSPLDPASTLIIVASKTFTTIETMTNAQTARKWVADTLGEAAVGAHFAAVSTALDKVAAFGIPEDRVFGFWDWVGGRYSVWSAIGLPVMIAVGPDNFRKFLAGAHAMDVHFRDAPLEKNLPVMLGLIGYWHRAICGYGSRAIIPYDQRLSRLPAYLQQLDMESNGKSVTLDGKPVSGPTGPVVWGEPGTNGQHAFFQLLHQGTDTIPLEFIVAAKGHEPTLDHQHEMLMANCLAQSEALMKGRTLDEARAQLQAKNLPASQVERIAPHRVFSGNRPSLTLIHDMLDPYALGRLIALYEHRVFVEAQIFGINAFDQWGVELGKELATELLPVVSGKEGASGRDASTQGLVAHLHARRKA</sequence>
<proteinExistence type="inferred from homology"/>
<name>G6PI_BRUSU</name>
<accession>Q8G2N3</accession>
<accession>G0K641</accession>
<reference key="1">
    <citation type="journal article" date="2002" name="Proc. Natl. Acad. Sci. U.S.A.">
        <title>The Brucella suis genome reveals fundamental similarities between animal and plant pathogens and symbionts.</title>
        <authorList>
            <person name="Paulsen I.T."/>
            <person name="Seshadri R."/>
            <person name="Nelson K.E."/>
            <person name="Eisen J.A."/>
            <person name="Heidelberg J.F."/>
            <person name="Read T.D."/>
            <person name="Dodson R.J."/>
            <person name="Umayam L.A."/>
            <person name="Brinkac L.M."/>
            <person name="Beanan M.J."/>
            <person name="Daugherty S.C."/>
            <person name="DeBoy R.T."/>
            <person name="Durkin A.S."/>
            <person name="Kolonay J.F."/>
            <person name="Madupu R."/>
            <person name="Nelson W.C."/>
            <person name="Ayodeji B."/>
            <person name="Kraul M."/>
            <person name="Shetty J."/>
            <person name="Malek J.A."/>
            <person name="Van Aken S.E."/>
            <person name="Riedmuller S."/>
            <person name="Tettelin H."/>
            <person name="Gill S.R."/>
            <person name="White O."/>
            <person name="Salzberg S.L."/>
            <person name="Hoover D.L."/>
            <person name="Lindler L.E."/>
            <person name="Halling S.M."/>
            <person name="Boyle S.M."/>
            <person name="Fraser C.M."/>
        </authorList>
    </citation>
    <scope>NUCLEOTIDE SEQUENCE [LARGE SCALE GENOMIC DNA]</scope>
    <source>
        <strain>1330</strain>
    </source>
</reference>
<reference key="2">
    <citation type="journal article" date="2011" name="J. Bacteriol.">
        <title>Revised genome sequence of Brucella suis 1330.</title>
        <authorList>
            <person name="Tae H."/>
            <person name="Shallom S."/>
            <person name="Settlage R."/>
            <person name="Preston D."/>
            <person name="Adams L.G."/>
            <person name="Garner H.R."/>
        </authorList>
    </citation>
    <scope>NUCLEOTIDE SEQUENCE [LARGE SCALE GENOMIC DNA]</scope>
    <source>
        <strain>1330</strain>
    </source>
</reference>
<feature type="chain" id="PRO_0000180610" description="Glucose-6-phosphate isomerase">
    <location>
        <begin position="1"/>
        <end position="549"/>
    </location>
</feature>
<feature type="active site" description="Proton donor" evidence="1">
    <location>
        <position position="353"/>
    </location>
</feature>
<feature type="active site" evidence="1">
    <location>
        <position position="384"/>
    </location>
</feature>
<feature type="active site" evidence="1">
    <location>
        <position position="513"/>
    </location>
</feature>
<protein>
    <recommendedName>
        <fullName evidence="1">Glucose-6-phosphate isomerase</fullName>
        <shortName evidence="1">GPI</shortName>
        <ecNumber evidence="1">5.3.1.9</ecNumber>
    </recommendedName>
    <alternativeName>
        <fullName evidence="1">Phosphoglucose isomerase</fullName>
        <shortName evidence="1">PGI</shortName>
    </alternativeName>
    <alternativeName>
        <fullName evidence="1">Phosphohexose isomerase</fullName>
        <shortName evidence="1">PHI</shortName>
    </alternativeName>
</protein>
<evidence type="ECO:0000255" key="1">
    <source>
        <dbReference type="HAMAP-Rule" id="MF_00473"/>
    </source>
</evidence>
<comment type="function">
    <text evidence="1">Catalyzes the reversible isomerization of glucose-6-phosphate to fructose-6-phosphate.</text>
</comment>
<comment type="catalytic activity">
    <reaction evidence="1">
        <text>alpha-D-glucose 6-phosphate = beta-D-fructose 6-phosphate</text>
        <dbReference type="Rhea" id="RHEA:11816"/>
        <dbReference type="ChEBI" id="CHEBI:57634"/>
        <dbReference type="ChEBI" id="CHEBI:58225"/>
        <dbReference type="EC" id="5.3.1.9"/>
    </reaction>
</comment>
<comment type="pathway">
    <text evidence="1">Carbohydrate biosynthesis; gluconeogenesis.</text>
</comment>
<comment type="pathway">
    <text evidence="1">Carbohydrate degradation; glycolysis; D-glyceraldehyde 3-phosphate and glycerone phosphate from D-glucose: step 2/4.</text>
</comment>
<comment type="subcellular location">
    <subcellularLocation>
        <location evidence="1">Cytoplasm</location>
    </subcellularLocation>
</comment>
<comment type="similarity">
    <text evidence="1">Belongs to the GPI family.</text>
</comment>
<keyword id="KW-0963">Cytoplasm</keyword>
<keyword id="KW-0312">Gluconeogenesis</keyword>
<keyword id="KW-0324">Glycolysis</keyword>
<keyword id="KW-0413">Isomerase</keyword>
<gene>
    <name evidence="1" type="primary">pgi</name>
    <name type="ordered locus">BR0285</name>
    <name type="ordered locus">BS1330_I0286</name>
</gene>
<dbReference type="EC" id="5.3.1.9" evidence="1"/>
<dbReference type="EMBL" id="AE014291">
    <property type="protein sequence ID" value="AAN29234.1"/>
    <property type="molecule type" value="Genomic_DNA"/>
</dbReference>
<dbReference type="EMBL" id="CP002997">
    <property type="protein sequence ID" value="AEM17647.1"/>
    <property type="molecule type" value="Genomic_DNA"/>
</dbReference>
<dbReference type="RefSeq" id="WP_004689454.1">
    <property type="nucleotide sequence ID" value="NZ_KN046804.1"/>
</dbReference>
<dbReference type="SMR" id="Q8G2N3"/>
<dbReference type="GeneID" id="97534321"/>
<dbReference type="KEGG" id="bms:BR0285"/>
<dbReference type="KEGG" id="bsi:BS1330_I0286"/>
<dbReference type="PATRIC" id="fig|204722.22.peg.1552"/>
<dbReference type="HOGENOM" id="CLU_017947_3_1_5"/>
<dbReference type="PhylomeDB" id="Q8G2N3"/>
<dbReference type="UniPathway" id="UPA00109">
    <property type="reaction ID" value="UER00181"/>
</dbReference>
<dbReference type="UniPathway" id="UPA00138"/>
<dbReference type="PRO" id="PR:Q8G2N3"/>
<dbReference type="Proteomes" id="UP000007104">
    <property type="component" value="Chromosome I"/>
</dbReference>
<dbReference type="GO" id="GO:0005829">
    <property type="term" value="C:cytosol"/>
    <property type="evidence" value="ECO:0007669"/>
    <property type="project" value="TreeGrafter"/>
</dbReference>
<dbReference type="GO" id="GO:0097367">
    <property type="term" value="F:carbohydrate derivative binding"/>
    <property type="evidence" value="ECO:0007669"/>
    <property type="project" value="InterPro"/>
</dbReference>
<dbReference type="GO" id="GO:0004347">
    <property type="term" value="F:glucose-6-phosphate isomerase activity"/>
    <property type="evidence" value="ECO:0007669"/>
    <property type="project" value="UniProtKB-UniRule"/>
</dbReference>
<dbReference type="GO" id="GO:0048029">
    <property type="term" value="F:monosaccharide binding"/>
    <property type="evidence" value="ECO:0007669"/>
    <property type="project" value="TreeGrafter"/>
</dbReference>
<dbReference type="GO" id="GO:0006094">
    <property type="term" value="P:gluconeogenesis"/>
    <property type="evidence" value="ECO:0007669"/>
    <property type="project" value="UniProtKB-UniRule"/>
</dbReference>
<dbReference type="GO" id="GO:0051156">
    <property type="term" value="P:glucose 6-phosphate metabolic process"/>
    <property type="evidence" value="ECO:0007669"/>
    <property type="project" value="TreeGrafter"/>
</dbReference>
<dbReference type="GO" id="GO:0006096">
    <property type="term" value="P:glycolytic process"/>
    <property type="evidence" value="ECO:0007669"/>
    <property type="project" value="UniProtKB-UniRule"/>
</dbReference>
<dbReference type="CDD" id="cd05015">
    <property type="entry name" value="SIS_PGI_1"/>
    <property type="match status" value="1"/>
</dbReference>
<dbReference type="CDD" id="cd05016">
    <property type="entry name" value="SIS_PGI_2"/>
    <property type="match status" value="1"/>
</dbReference>
<dbReference type="FunFam" id="3.40.50.10490:FF:000018">
    <property type="entry name" value="Glucose-6-phosphate isomerase"/>
    <property type="match status" value="1"/>
</dbReference>
<dbReference type="Gene3D" id="1.10.1390.10">
    <property type="match status" value="1"/>
</dbReference>
<dbReference type="Gene3D" id="3.40.50.10490">
    <property type="entry name" value="Glucose-6-phosphate isomerase like protein, domain 1"/>
    <property type="match status" value="2"/>
</dbReference>
<dbReference type="HAMAP" id="MF_00473">
    <property type="entry name" value="G6P_isomerase"/>
    <property type="match status" value="1"/>
</dbReference>
<dbReference type="InterPro" id="IPR001672">
    <property type="entry name" value="G6P_Isomerase"/>
</dbReference>
<dbReference type="InterPro" id="IPR023096">
    <property type="entry name" value="G6P_Isomerase_C"/>
</dbReference>
<dbReference type="InterPro" id="IPR018189">
    <property type="entry name" value="Phosphoglucose_isomerase_CS"/>
</dbReference>
<dbReference type="InterPro" id="IPR046348">
    <property type="entry name" value="SIS_dom_sf"/>
</dbReference>
<dbReference type="InterPro" id="IPR035476">
    <property type="entry name" value="SIS_PGI_1"/>
</dbReference>
<dbReference type="InterPro" id="IPR035482">
    <property type="entry name" value="SIS_PGI_2"/>
</dbReference>
<dbReference type="NCBIfam" id="NF001211">
    <property type="entry name" value="PRK00179.1"/>
    <property type="match status" value="1"/>
</dbReference>
<dbReference type="PANTHER" id="PTHR11469">
    <property type="entry name" value="GLUCOSE-6-PHOSPHATE ISOMERASE"/>
    <property type="match status" value="1"/>
</dbReference>
<dbReference type="PANTHER" id="PTHR11469:SF1">
    <property type="entry name" value="GLUCOSE-6-PHOSPHATE ISOMERASE"/>
    <property type="match status" value="1"/>
</dbReference>
<dbReference type="Pfam" id="PF00342">
    <property type="entry name" value="PGI"/>
    <property type="match status" value="1"/>
</dbReference>
<dbReference type="PRINTS" id="PR00662">
    <property type="entry name" value="G6PISOMERASE"/>
</dbReference>
<dbReference type="SUPFAM" id="SSF53697">
    <property type="entry name" value="SIS domain"/>
    <property type="match status" value="1"/>
</dbReference>
<dbReference type="PROSITE" id="PS00765">
    <property type="entry name" value="P_GLUCOSE_ISOMERASE_1"/>
    <property type="match status" value="1"/>
</dbReference>
<dbReference type="PROSITE" id="PS00174">
    <property type="entry name" value="P_GLUCOSE_ISOMERASE_2"/>
    <property type="match status" value="1"/>
</dbReference>
<dbReference type="PROSITE" id="PS51463">
    <property type="entry name" value="P_GLUCOSE_ISOMERASE_3"/>
    <property type="match status" value="1"/>
</dbReference>